<sequence>MADDKEMPAAVVDGHDQVTGHIISTTIGGKNGEPKQTISYMAERVVGTGSFGIVFQAKCLETGETVAIKKVLQDRRYKNRELQLMRVMDHPNVVCLKHCFFSTTSKDELFLNLVMEYVPESLYRVLKHYSSANQRMPLVYVKLYMYQIFRGLAYIHNVAGVCHRDLKPQNLLVDPLTHQVKICDFGSAKQLVKGEANISYICSRFYRAPELIFGATEYTTSIDIWSAGCVLAELLLGQPLFPGENAVDQLVEIIKVLGTPTREEIRCMNPHYTDFRFPQIKAHPWHKIFHKRMPPEAIDFASRLLQYSPSLRCTALEACAHPFFDELREPNARLPNGRPFPPLFNFKQEVAGSSPELVNKLIPDHIKRQLGLSFLNQSGT</sequence>
<feature type="chain" id="PRO_0000086222" description="Shaggy-related protein kinase eta">
    <location>
        <begin position="1"/>
        <end position="380"/>
    </location>
</feature>
<feature type="domain" description="Protein kinase" evidence="2">
    <location>
        <begin position="40"/>
        <end position="324"/>
    </location>
</feature>
<feature type="active site" description="Proton acceptor" evidence="2 3">
    <location>
        <position position="165"/>
    </location>
</feature>
<feature type="binding site" evidence="2">
    <location>
        <begin position="46"/>
        <end position="54"/>
    </location>
    <ligand>
        <name>ATP</name>
        <dbReference type="ChEBI" id="CHEBI:30616"/>
    </ligand>
</feature>
<feature type="binding site" evidence="2">
    <location>
        <position position="69"/>
    </location>
    <ligand>
        <name>ATP</name>
        <dbReference type="ChEBI" id="CHEBI:30616"/>
    </ligand>
</feature>
<feature type="modified residue" description="Phosphothreonine" evidence="1">
    <location>
        <position position="104"/>
    </location>
</feature>
<feature type="modified residue" description="Phosphoserine" evidence="1">
    <location>
        <position position="105"/>
    </location>
</feature>
<feature type="modified residue" description="Phosphoserine" evidence="1">
    <location>
        <position position="187"/>
    </location>
</feature>
<feature type="modified residue" description="Phosphotyrosine" evidence="12">
    <location>
        <position position="200"/>
    </location>
</feature>
<feature type="modified residue" description="Phosphothreonine" evidence="1">
    <location>
        <position position="220"/>
    </location>
</feature>
<feature type="modified residue" description="Phosphothreonine" evidence="1">
    <location>
        <position position="261"/>
    </location>
</feature>
<feature type="modified residue" description="Phosphoserine" evidence="1">
    <location>
        <position position="310"/>
    </location>
</feature>
<feature type="modified residue" description="Phosphothreonine" evidence="1">
    <location>
        <position position="314"/>
    </location>
</feature>
<feature type="modified residue" description="Phosphoserine" evidence="1">
    <location>
        <position position="353"/>
    </location>
</feature>
<feature type="splice variant" id="VSP_060065" description="In isoform 2.">
    <location>
        <begin position="1"/>
        <end position="6"/>
    </location>
</feature>
<feature type="mutagenesis site" description="Abolishes kinase activity. Altered BASL exclusion from nucleus." evidence="6 16 20">
    <original>K</original>
    <variation>R</variation>
    <location>
        <position position="69"/>
    </location>
</feature>
<feature type="mutagenesis site" description="No effect." evidence="8">
    <original>R</original>
    <variation>A</variation>
    <location>
        <position position="80"/>
    </location>
</feature>
<feature type="mutagenesis site" description="Normal interaction with KIB1." evidence="17">
    <original>Y</original>
    <variation>F</variation>
    <location>
        <position position="200"/>
    </location>
</feature>
<feature type="mutagenesis site" description="In bin2-2; brassinosteroid-insensitive dwarf mutant; increased kinase activity." evidence="6">
    <original>T</original>
    <variation>I</variation>
    <location>
        <position position="261"/>
    </location>
</feature>
<feature type="mutagenesis site" description="In dwf12-2D/bin2-1; brassinosteroid-insensitive dwarf mutant; increased kinase activity. Reduced interaction with KIB1. Strongly reduced number of stomata in hypocotyls as well as decreased stomatal index in leaves." evidence="6 9 14 17">
    <original>E</original>
    <variation>K</variation>
    <location>
        <position position="263"/>
    </location>
</feature>
<feature type="mutagenesis site" description="In dwf12-1D/ucu1-1/ucu1-2; brassinosteroid-insensitive dwarf mutant." evidence="5 9">
    <original>E</original>
    <variation>K</variation>
    <location>
        <position position="264"/>
    </location>
</feature>
<feature type="mutagenesis site" description="In ucu1-3; leaves rolled spirally downward." evidence="5">
    <original>P</original>
    <variation>S</variation>
    <location>
        <position position="284"/>
    </location>
</feature>
<feature type="sequence conflict" description="In Ref. 1; CAA64409 and 2; CAA70144." evidence="27" ref="1 2">
    <original>S</original>
    <variation>E</variation>
    <location>
        <position position="105"/>
    </location>
</feature>
<feature type="sequence conflict" description="In Ref. 1; CAA64409 and 2; CAA70144." evidence="27" ref="1 2">
    <original>S</original>
    <variation>T</variation>
    <location>
        <position position="121"/>
    </location>
</feature>
<feature type="sequence conflict" description="In Ref. 1; CAA64409 and 2; CAA70144." evidence="27" ref="1 2">
    <original>M</original>
    <variation>S</variation>
    <location>
        <position position="145"/>
    </location>
</feature>
<feature type="sequence conflict" description="In Ref. 1; CAA64409 and 2; CAA70144." evidence="27" ref="1 2">
    <original>NVA</original>
    <variation>SCP</variation>
    <location>
        <begin position="157"/>
        <end position="159"/>
    </location>
</feature>
<feature type="sequence conflict" description="In Ref. 1; CAA64409 and 2; CAA70144." evidence="27" ref="1 2">
    <original>A</original>
    <variation>P</variation>
    <location>
        <position position="196"/>
    </location>
</feature>
<feature type="sequence conflict" description="In Ref. 1; CAA64409 and 2; CAA70144." evidence="27" ref="1 2">
    <original>H</original>
    <variation>N</variation>
    <location>
        <position position="271"/>
    </location>
</feature>
<feature type="sequence conflict" description="In Ref. 1; CAA64409 and 2; CAA70144." evidence="27" ref="1 2">
    <original>R</original>
    <variation>K</variation>
    <location>
        <position position="276"/>
    </location>
</feature>
<feature type="sequence conflict" description="In Ref. 1; CAA64409 and 2; CAA70144." evidence="27" ref="1 2">
    <original>IDF</original>
    <variation>VDL</variation>
    <location>
        <begin position="298"/>
        <end position="300"/>
    </location>
</feature>
<feature type="sequence conflict" description="In Ref. 8; AAL77705." evidence="27" ref="8">
    <original>L</original>
    <variation>H</variation>
    <location>
        <position position="327"/>
    </location>
</feature>
<feature type="sequence conflict" description="In Ref. 1; CAA64409 and 2; CAA70144." evidence="27" ref="1 2">
    <original>F</original>
    <variation>L</variation>
    <location>
        <position position="340"/>
    </location>
</feature>
<organism>
    <name type="scientific">Arabidopsis thaliana</name>
    <name type="common">Mouse-ear cress</name>
    <dbReference type="NCBI Taxonomy" id="3702"/>
    <lineage>
        <taxon>Eukaryota</taxon>
        <taxon>Viridiplantae</taxon>
        <taxon>Streptophyta</taxon>
        <taxon>Embryophyta</taxon>
        <taxon>Tracheophyta</taxon>
        <taxon>Spermatophyta</taxon>
        <taxon>Magnoliopsida</taxon>
        <taxon>eudicotyledons</taxon>
        <taxon>Gunneridae</taxon>
        <taxon>Pentapetalae</taxon>
        <taxon>rosids</taxon>
        <taxon>malvids</taxon>
        <taxon>Brassicales</taxon>
        <taxon>Brassicaceae</taxon>
        <taxon>Camelineae</taxon>
        <taxon>Arabidopsis</taxon>
    </lineage>
</organism>
<name>KSG7_ARATH</name>
<evidence type="ECO:0000255" key="1"/>
<evidence type="ECO:0000255" key="2">
    <source>
        <dbReference type="PROSITE-ProRule" id="PRU00159"/>
    </source>
</evidence>
<evidence type="ECO:0000255" key="3">
    <source>
        <dbReference type="PROSITE-ProRule" id="PRU10027"/>
    </source>
</evidence>
<evidence type="ECO:0000269" key="4">
    <source>
    </source>
</evidence>
<evidence type="ECO:0000269" key="5">
    <source>
    </source>
</evidence>
<evidence type="ECO:0000269" key="6">
    <source>
    </source>
</evidence>
<evidence type="ECO:0000269" key="7">
    <source>
    </source>
</evidence>
<evidence type="ECO:0000269" key="8">
    <source>
    </source>
</evidence>
<evidence type="ECO:0000269" key="9">
    <source>
    </source>
</evidence>
<evidence type="ECO:0000269" key="10">
    <source>
    </source>
</evidence>
<evidence type="ECO:0000269" key="11">
    <source>
    </source>
</evidence>
<evidence type="ECO:0000269" key="12">
    <source>
    </source>
</evidence>
<evidence type="ECO:0000269" key="13">
    <source>
    </source>
</evidence>
<evidence type="ECO:0000269" key="14">
    <source>
    </source>
</evidence>
<evidence type="ECO:0000269" key="15">
    <source>
    </source>
</evidence>
<evidence type="ECO:0000269" key="16">
    <source>
    </source>
</evidence>
<evidence type="ECO:0000269" key="17">
    <source>
    </source>
</evidence>
<evidence type="ECO:0000269" key="18">
    <source>
    </source>
</evidence>
<evidence type="ECO:0000269" key="19">
    <source>
    </source>
</evidence>
<evidence type="ECO:0000269" key="20">
    <source>
    </source>
</evidence>
<evidence type="ECO:0000303" key="21">
    <source>
    </source>
</evidence>
<evidence type="ECO:0000303" key="22">
    <source>
    </source>
</evidence>
<evidence type="ECO:0000303" key="23">
    <source>
    </source>
</evidence>
<evidence type="ECO:0000303" key="24">
    <source>
    </source>
</evidence>
<evidence type="ECO:0000303" key="25">
    <source>
    </source>
</evidence>
<evidence type="ECO:0000303" key="26">
    <source>
    </source>
</evidence>
<evidence type="ECO:0000305" key="27"/>
<evidence type="ECO:0000312" key="28">
    <source>
        <dbReference type="Araport" id="AT4G18710"/>
    </source>
</evidence>
<evidence type="ECO:0000312" key="29">
    <source>
        <dbReference type="EMBL" id="CAB37456.1"/>
    </source>
</evidence>
<keyword id="KW-0025">Alternative splicing</keyword>
<keyword id="KW-0067">ATP-binding</keyword>
<keyword id="KW-1070">Brassinosteroid signaling pathway</keyword>
<keyword id="KW-1003">Cell membrane</keyword>
<keyword id="KW-0963">Cytoplasm</keyword>
<keyword id="KW-0945">Host-virus interaction</keyword>
<keyword id="KW-0418">Kinase</keyword>
<keyword id="KW-0472">Membrane</keyword>
<keyword id="KW-0547">Nucleotide-binding</keyword>
<keyword id="KW-0539">Nucleus</keyword>
<keyword id="KW-0597">Phosphoprotein</keyword>
<keyword id="KW-1185">Reference proteome</keyword>
<keyword id="KW-0723">Serine/threonine-protein kinase</keyword>
<keyword id="KW-0808">Transferase</keyword>
<keyword id="KW-0832">Ubl conjugation</keyword>
<comment type="function">
    <text evidence="6 7 8 10 13 14 15 16 18 20">Negative regulator in brassinosteroid signal transduction pathway important for plant growth. May be also involved in auxin signaling pathway. Phosphorylates and increases the degradation of BZR1 and BZR2/BES1 by the proteasome. Phosphorylates BHLH150, beet curly top virus C4 and tomato golden mosaic virus AC4 on threonine and serine residues. Upon brassinosteroid signaling, inhibits stomatal development by phosphorylating and inhibiting the MAPKK kinase YDA and the MAPK kinases MKK4 and MKK5 (PubMed:11847343, PubMed:12114546, PubMed:12427989, PubMed:17280695, PubMed:22307275, PubMed:23341468). Phosphorylates BSK1, BSK3, BSK5, BSK6, BSK8 and BSK11 in vitro (PubMed:23496207). Phoyphorylates and destabilizes WRKY46, WRKY54 and WRKY70 (PubMed:28576847). Mediates BASL nuclear exclusion; kinase activity is required for this function (PubMed:30429609). Required first at the cortical polarity site, to restrict MAPK signaling and promote asymmetric cell division (ACD), and second in the nucleus of stomatal lineage ground cells (SLGCs) or meristemoids, to limit cell division and to promote differentiation into pavement or stomatal guard cells, respectively, likely by initiating BASL polarization (PubMed:30429609). Phosphorylates BASL, YDA and SPCH in vitro and POLAR in vivo (PubMed:30429609). Phosphorylates and inhibits SPCH in the nucleus of SLGC undergoing ACD, thus negatively regulating stomatal development (PubMed:22466366, PubMed:30429609).</text>
</comment>
<comment type="catalytic activity">
    <reaction evidence="6 9 14">
        <text>L-seryl-[protein] + ATP = O-phospho-L-seryl-[protein] + ADP + H(+)</text>
        <dbReference type="Rhea" id="RHEA:17989"/>
        <dbReference type="Rhea" id="RHEA-COMP:9863"/>
        <dbReference type="Rhea" id="RHEA-COMP:11604"/>
        <dbReference type="ChEBI" id="CHEBI:15378"/>
        <dbReference type="ChEBI" id="CHEBI:29999"/>
        <dbReference type="ChEBI" id="CHEBI:30616"/>
        <dbReference type="ChEBI" id="CHEBI:83421"/>
        <dbReference type="ChEBI" id="CHEBI:456216"/>
        <dbReference type="EC" id="2.7.11.1"/>
    </reaction>
</comment>
<comment type="catalytic activity">
    <reaction evidence="6 9 14">
        <text>L-threonyl-[protein] + ATP = O-phospho-L-threonyl-[protein] + ADP + H(+)</text>
        <dbReference type="Rhea" id="RHEA:46608"/>
        <dbReference type="Rhea" id="RHEA-COMP:11060"/>
        <dbReference type="Rhea" id="RHEA-COMP:11605"/>
        <dbReference type="ChEBI" id="CHEBI:15378"/>
        <dbReference type="ChEBI" id="CHEBI:30013"/>
        <dbReference type="ChEBI" id="CHEBI:30616"/>
        <dbReference type="ChEBI" id="CHEBI:61977"/>
        <dbReference type="ChEBI" id="CHEBI:456216"/>
        <dbReference type="EC" id="2.7.11.1"/>
    </reaction>
</comment>
<comment type="activity regulation">
    <text evidence="12 14 17 27">Inactivated by an unknown mechanism after binding of brassinosteroids to the brassinosteroid receptor complex (Probable). Inhibited by lithium. Inhibited by dephosphorylation at Tyr-200 by BSU1 (PubMed:21855796). Competitive inhibition by KIB1 that reduces substrate (e.g. BZR1) access (PubMed:28575660). Repressed by bikinin (PubMed:22466366).</text>
</comment>
<comment type="subunit">
    <text evidence="7 8 10 11 13 15 16 17 18 20">Interacts in vitro with the C-terminal fragment of BZR1 and with BES1/BZR2, but not through the kinase domain. Interacts with BHLH150, beet curly top virus AL4/C4 and tomato golden mosaic virus AL4/AC4. Interacts with YDA. Interacts with MKK4. Interacts with KIB1 and KIB2 in a brassinosteroid (BR)-dependent manner (PubMed:28575660). Interacts with BSK1, BSK6, BSK8 and BSK11 (PubMed:23496207). Binds to WRKY46, WRKY54 and WRKY70 (PubMed:28576847). Component of a complex made of POLAR, BASL, ASK7/BIN2 and ASK3/SK12 (PubMed:30429609). Binds to POLAR and BASL (PubMed:30429609).</text>
</comment>
<comment type="interaction">
    <interactant intactId="EBI-1798250">
        <id>Q39011</id>
    </interactant>
    <interactant intactId="EBI-1799262">
        <id>Q94JM3</id>
        <label>ARF2</label>
    </interactant>
    <organismsDiffer>false</organismsDiffer>
    <experiments>6</experiments>
</comment>
<comment type="interaction">
    <interactant intactId="EBI-1798250">
        <id>Q39011</id>
    </interactant>
    <interactant intactId="EBI-632284">
        <id>P93022</id>
        <label>ARF7</label>
    </interactant>
    <organismsDiffer>false</organismsDiffer>
    <experiments>2</experiments>
</comment>
<comment type="interaction">
    <interactant intactId="EBI-1798250">
        <id>Q39011</id>
    </interactant>
    <interactant intactId="EBI-1798250">
        <id>Q39011</id>
        <label>ASK7</label>
    </interactant>
    <organismsDiffer>false</organismsDiffer>
    <experiments>5</experiments>
</comment>
<comment type="interaction">
    <interactant intactId="EBI-1798250">
        <id>Q39011</id>
    </interactant>
    <interactant intactId="EBI-25523891">
        <id>A0A384LCJ3</id>
        <label>AXX17_At3g53170</label>
    </interactant>
    <organismsDiffer>false</organismsDiffer>
    <experiments>3</experiments>
</comment>
<comment type="interaction">
    <interactant intactId="EBI-1798250">
        <id>Q39011</id>
    </interactant>
    <interactant intactId="EBI-1803261">
        <id>Q8S307</id>
        <label>BZR1</label>
    </interactant>
    <organismsDiffer>false</organismsDiffer>
    <experiments>2</experiments>
</comment>
<comment type="interaction">
    <interactant intactId="EBI-1798250">
        <id>Q39011</id>
    </interactant>
    <interactant intactId="EBI-617078">
        <id>Q9LN63</id>
        <label>BZR2</label>
    </interactant>
    <organismsDiffer>false</organismsDiffer>
    <experiments>2</experiments>
</comment>
<comment type="interaction">
    <interactant intactId="EBI-1798250">
        <id>Q39011</id>
    </interactant>
    <interactant intactId="EBI-1396652">
        <id>Q8L8A6</id>
        <label>GRF5</label>
    </interactant>
    <organismsDiffer>false</organismsDiffer>
    <experiments>3</experiments>
</comment>
<comment type="interaction">
    <interactant intactId="EBI-1798250">
        <id>Q39011</id>
    </interactant>
    <interactant intactId="EBI-4432427">
        <id>Q9AT61</id>
        <label>LBD13</label>
    </interactant>
    <organismsDiffer>false</organismsDiffer>
    <experiments>3</experiments>
</comment>
<comment type="interaction">
    <interactant intactId="EBI-1798250">
        <id>Q39011</id>
    </interactant>
    <interactant intactId="EBI-1546577">
        <id>Q9C9A5</id>
        <label>MYBL2</label>
    </interactant>
    <organismsDiffer>false</organismsDiffer>
    <experiments>2</experiments>
</comment>
<comment type="interaction">
    <interactant intactId="EBI-1798250">
        <id>Q39011</id>
    </interactant>
    <interactant intactId="EBI-4426144">
        <id>Q9C9L2</id>
        <label>TCP15</label>
    </interactant>
    <organismsDiffer>false</organismsDiffer>
    <experiments>3</experiments>
</comment>
<comment type="interaction">
    <interactant intactId="EBI-1798250">
        <id>Q39011</id>
    </interactant>
    <interactant intactId="EBI-15192327">
        <id>Q9LEZ9</id>
        <label>TCP17</label>
    </interactant>
    <organismsDiffer>false</organismsDiffer>
    <experiments>4</experiments>
</comment>
<comment type="interaction">
    <interactant intactId="EBI-1798250">
        <id>Q39011</id>
    </interactant>
    <interactant intactId="EBI-15730235">
        <id>Q9FII5</id>
        <label>TDR</label>
    </interactant>
    <organismsDiffer>false</organismsDiffer>
    <experiments>2</experiments>
</comment>
<comment type="interaction">
    <interactant intactId="EBI-1798250">
        <id>Q39011</id>
    </interactant>
    <interactant intactId="EBI-15967064">
        <id>Q9CAD5</id>
        <label>YDA</label>
    </interactant>
    <organismsDiffer>false</organismsDiffer>
    <experiments>4</experiments>
</comment>
<comment type="interaction">
    <interactant intactId="EBI-1798250">
        <id>Q39011</id>
    </interactant>
    <interactant intactId="EBI-1806244">
        <id>O64722</id>
        <label>ZHD3</label>
    </interactant>
    <organismsDiffer>false</organismsDiffer>
    <experiments>3</experiments>
</comment>
<comment type="subcellular location">
    <subcellularLocation>
        <location evidence="20">Cytoplasm</location>
        <location evidence="20">Cell cortex</location>
    </subcellularLocation>
    <subcellularLocation>
        <location evidence="19 20">Cytoplasm</location>
    </subcellularLocation>
    <subcellularLocation>
        <location evidence="19 20">Nucleus</location>
    </subcellularLocation>
    <subcellularLocation>
        <location evidence="19 20">Cell membrane</location>
        <topology evidence="27">Peripheral membrane protein</topology>
        <orientation evidence="27">Cytoplasmic side</orientation>
    </subcellularLocation>
    <text evidence="19 20">Spotty cytoplasmic as well as nuclear localization (PubMed:28652362). Recruited to the plasma membrane by OPS (PubMed:28652362). Localized throughout the plasma membrane in asymmetric cell division (ACD) precursors (PubMed:30429609). Accumulates transiently in a polarized pattern at the plasma membrane immediately before ACD, relocalizing to well-defined foci, in a POLAR-dependent and in the presence of BASL (PubMed:30429609). Mostly abundant and more polarized at the cell cortex of stomatal lineage cells with asymmetric cell division (ACD) potential (PubMed:30429609).</text>
</comment>
<comment type="alternative products">
    <event type="alternative splicing"/>
    <isoform>
        <id>Q39011-1</id>
        <name>1</name>
        <sequence type="displayed"/>
    </isoform>
    <isoform>
        <id>Q39011-2</id>
        <name>2</name>
        <sequence type="described" ref="VSP_060065"/>
    </isoform>
    <text>A number of isoforms are produced. According to EST sequences.</text>
</comment>
<comment type="tissue specificity">
    <text evidence="4 14 20">In the two outer cell layers of the developing seed coat and restricted to the suspensor cells in developing embryos (PubMed:10080716). Mostly expressed in stomatal lineage cells with asymmetric cell division (ACD) potential (PubMed:30429609). Observed in small cells of non-protruding hypocotyl cell files and of developing cotyledon epidermis (PubMed:22466366).</text>
</comment>
<comment type="developmental stage">
    <text evidence="20">Detected throughout the epidermis in young seedlings, and accumulates progressively during epidermal cell maturation, especially in stomatal lineage cells with asymmetric cell division (ACD) potential.</text>
</comment>
<comment type="PTM">
    <text evidence="10 14">Autophosphorylated mainly on threonine and serine residues.</text>
</comment>
<comment type="PTM">
    <text evidence="17">Ubiquitination and subsequent proteasomal degradation mediated by KIB1.</text>
</comment>
<comment type="disruption phenotype">
    <text evidence="14">Increased stability of SPCH and formation of excessive stomatal and non-stomatal cell.</text>
</comment>
<comment type="miscellaneous">
    <text>Unlike other GSK3 kinases, does not require a priming phosphorylation event or the presence of a scaffold protein to phosphorylate its substrates.</text>
</comment>
<comment type="similarity">
    <text evidence="27">Belongs to the protein kinase superfamily. CMGC Ser/Thr protein kinase family. GSK-3 subfamily.</text>
</comment>
<reference key="1">
    <citation type="online journal article" date="1997" name="Plant Gene Register">
        <title>Three new cDNAs related to SGG/GSK-3 (SHAGGY/glycogen synthase kinase-3) from Arabidopsis thaliana.</title>
        <authorList>
            <person name="Dornelas M.C."/>
            <person name="Schwebel-Dugue N."/>
            <person name="Thomas M."/>
            <person name="Lecharny A."/>
            <person name="Kreis M."/>
        </authorList>
        <locator>PGR97-008</locator>
    </citation>
    <scope>NUCLEOTIDE SEQUENCE [MRNA] (ISOFORM 1)</scope>
    <source>
        <strain>cv. Columbia</strain>
    </source>
</reference>
<reference key="2">
    <citation type="journal article" date="1998" name="Gene">
        <title>The Arabidopsis SHAGGY-related protein kinase (ASK) gene family: structure, organization and evolution.</title>
        <authorList>
            <person name="Dornelas M.C."/>
            <person name="Lejeune B."/>
            <person name="Dron M."/>
            <person name="Kreis M."/>
        </authorList>
    </citation>
    <scope>NUCLEOTIDE SEQUENCE [GENOMIC DNA]</scope>
    <source>
        <strain>cv. Columbia</strain>
    </source>
</reference>
<reference key="3">
    <citation type="journal article" date="2002" name="Plant Physiol.">
        <title>Arabidopsis brassinosteroid-insensitive dwarf12 mutants are semidominant and defective in a glycogen synthase kinase 3beta-like kinase.</title>
        <authorList>
            <person name="Choe S."/>
            <person name="Schmitz R.J."/>
            <person name="Fujioka S."/>
            <person name="Takatsuto S."/>
            <person name="Lee M.-O."/>
            <person name="Yoshida S."/>
            <person name="Feldmann K.A."/>
            <person name="Tax F.E."/>
        </authorList>
    </citation>
    <scope>NUCLEOTIDE SEQUENCE [GENOMIC DNA]</scope>
    <scope>MUTAGENESIS OF GLU-263 AND GLU-264</scope>
    <scope>MUTANTS DWF12</scope>
</reference>
<reference key="4">
    <citation type="journal article" date="2002" name="Dev. Biol.">
        <title>The UCU1 Arabidopsis gene encodes a SHAGGY/GSK3-like kinase required for cell expansion along the proximodistal axis.</title>
        <authorList>
            <person name="Perez-Perez J.M."/>
            <person name="Ponce M.R."/>
            <person name="Micol J.L."/>
        </authorList>
    </citation>
    <scope>NUCLEOTIDE SEQUENCE [GENOMIC DNA]</scope>
    <scope>MUTAGENESIS OF GLU-264 AND PRO-284</scope>
    <scope>MUTANTS UCU1</scope>
</reference>
<reference key="5">
    <citation type="journal article" date="2002" name="Science">
        <title>Regulation of brassinosteroid signaling by a GSK3/SHAGGY-like kinase.</title>
        <authorList>
            <person name="Li J."/>
            <person name="Nam K.H."/>
        </authorList>
    </citation>
    <scope>NUCLEOTIDE SEQUENCE [GENOMIC DNA]</scope>
    <scope>FUNCTION</scope>
    <scope>MUTAGENESIS OF LYS-69 AND THR-261</scope>
    <scope>MUTANTS BIN2</scope>
</reference>
<reference key="6">
    <citation type="journal article" date="1999" name="Nature">
        <title>Sequence and analysis of chromosome 4 of the plant Arabidopsis thaliana.</title>
        <authorList>
            <person name="Mayer K.F.X."/>
            <person name="Schueller C."/>
            <person name="Wambutt R."/>
            <person name="Murphy G."/>
            <person name="Volckaert G."/>
            <person name="Pohl T."/>
            <person name="Duesterhoeft A."/>
            <person name="Stiekema W."/>
            <person name="Entian K.-D."/>
            <person name="Terryn N."/>
            <person name="Harris B."/>
            <person name="Ansorge W."/>
            <person name="Brandt P."/>
            <person name="Grivell L.A."/>
            <person name="Rieger M."/>
            <person name="Weichselgartner M."/>
            <person name="de Simone V."/>
            <person name="Obermaier B."/>
            <person name="Mache R."/>
            <person name="Mueller M."/>
            <person name="Kreis M."/>
            <person name="Delseny M."/>
            <person name="Puigdomenech P."/>
            <person name="Watson M."/>
            <person name="Schmidtheini T."/>
            <person name="Reichert B."/>
            <person name="Portetelle D."/>
            <person name="Perez-Alonso M."/>
            <person name="Boutry M."/>
            <person name="Bancroft I."/>
            <person name="Vos P."/>
            <person name="Hoheisel J."/>
            <person name="Zimmermann W."/>
            <person name="Wedler H."/>
            <person name="Ridley P."/>
            <person name="Langham S.-A."/>
            <person name="McCullagh B."/>
            <person name="Bilham L."/>
            <person name="Robben J."/>
            <person name="van der Schueren J."/>
            <person name="Grymonprez B."/>
            <person name="Chuang Y.-J."/>
            <person name="Vandenbussche F."/>
            <person name="Braeken M."/>
            <person name="Weltjens I."/>
            <person name="Voet M."/>
            <person name="Bastiaens I."/>
            <person name="Aert R."/>
            <person name="Defoor E."/>
            <person name="Weitzenegger T."/>
            <person name="Bothe G."/>
            <person name="Ramsperger U."/>
            <person name="Hilbert H."/>
            <person name="Braun M."/>
            <person name="Holzer E."/>
            <person name="Brandt A."/>
            <person name="Peters S."/>
            <person name="van Staveren M."/>
            <person name="Dirkse W."/>
            <person name="Mooijman P."/>
            <person name="Klein Lankhorst R."/>
            <person name="Rose M."/>
            <person name="Hauf J."/>
            <person name="Koetter P."/>
            <person name="Berneiser S."/>
            <person name="Hempel S."/>
            <person name="Feldpausch M."/>
            <person name="Lamberth S."/>
            <person name="Van den Daele H."/>
            <person name="De Keyser A."/>
            <person name="Buysshaert C."/>
            <person name="Gielen J."/>
            <person name="Villarroel R."/>
            <person name="De Clercq R."/>
            <person name="van Montagu M."/>
            <person name="Rogers J."/>
            <person name="Cronin A."/>
            <person name="Quail M.A."/>
            <person name="Bray-Allen S."/>
            <person name="Clark L."/>
            <person name="Doggett J."/>
            <person name="Hall S."/>
            <person name="Kay M."/>
            <person name="Lennard N."/>
            <person name="McLay K."/>
            <person name="Mayes R."/>
            <person name="Pettett A."/>
            <person name="Rajandream M.A."/>
            <person name="Lyne M."/>
            <person name="Benes V."/>
            <person name="Rechmann S."/>
            <person name="Borkova D."/>
            <person name="Bloecker H."/>
            <person name="Scharfe M."/>
            <person name="Grimm M."/>
            <person name="Loehnert T.-H."/>
            <person name="Dose S."/>
            <person name="de Haan M."/>
            <person name="Maarse A.C."/>
            <person name="Schaefer M."/>
            <person name="Mueller-Auer S."/>
            <person name="Gabel C."/>
            <person name="Fuchs M."/>
            <person name="Fartmann B."/>
            <person name="Granderath K."/>
            <person name="Dauner D."/>
            <person name="Herzl A."/>
            <person name="Neumann S."/>
            <person name="Argiriou A."/>
            <person name="Vitale D."/>
            <person name="Liguori R."/>
            <person name="Piravandi E."/>
            <person name="Massenet O."/>
            <person name="Quigley F."/>
            <person name="Clabauld G."/>
            <person name="Muendlein A."/>
            <person name="Felber R."/>
            <person name="Schnabl S."/>
            <person name="Hiller R."/>
            <person name="Schmidt W."/>
            <person name="Lecharny A."/>
            <person name="Aubourg S."/>
            <person name="Chefdor F."/>
            <person name="Cooke R."/>
            <person name="Berger C."/>
            <person name="Monfort A."/>
            <person name="Casacuberta E."/>
            <person name="Gibbons T."/>
            <person name="Weber N."/>
            <person name="Vandenbol M."/>
            <person name="Bargues M."/>
            <person name="Terol J."/>
            <person name="Torres A."/>
            <person name="Perez-Perez A."/>
            <person name="Purnelle B."/>
            <person name="Bent E."/>
            <person name="Johnson S."/>
            <person name="Tacon D."/>
            <person name="Jesse T."/>
            <person name="Heijnen L."/>
            <person name="Schwarz S."/>
            <person name="Scholler P."/>
            <person name="Heber S."/>
            <person name="Francs P."/>
            <person name="Bielke C."/>
            <person name="Frishman D."/>
            <person name="Haase D."/>
            <person name="Lemcke K."/>
            <person name="Mewes H.-W."/>
            <person name="Stocker S."/>
            <person name="Zaccaria P."/>
            <person name="Bevan M."/>
            <person name="Wilson R.K."/>
            <person name="de la Bastide M."/>
            <person name="Habermann K."/>
            <person name="Parnell L."/>
            <person name="Dedhia N."/>
            <person name="Gnoj L."/>
            <person name="Schutz K."/>
            <person name="Huang E."/>
            <person name="Spiegel L."/>
            <person name="Sekhon M."/>
            <person name="Murray J."/>
            <person name="Sheet P."/>
            <person name="Cordes M."/>
            <person name="Abu-Threideh J."/>
            <person name="Stoneking T."/>
            <person name="Kalicki J."/>
            <person name="Graves T."/>
            <person name="Harmon G."/>
            <person name="Edwards J."/>
            <person name="Latreille P."/>
            <person name="Courtney L."/>
            <person name="Cloud J."/>
            <person name="Abbott A."/>
            <person name="Scott K."/>
            <person name="Johnson D."/>
            <person name="Minx P."/>
            <person name="Bentley D."/>
            <person name="Fulton B."/>
            <person name="Miller N."/>
            <person name="Greco T."/>
            <person name="Kemp K."/>
            <person name="Kramer J."/>
            <person name="Fulton L."/>
            <person name="Mardis E."/>
            <person name="Dante M."/>
            <person name="Pepin K."/>
            <person name="Hillier L.W."/>
            <person name="Nelson J."/>
            <person name="Spieth J."/>
            <person name="Ryan E."/>
            <person name="Andrews S."/>
            <person name="Geisel C."/>
            <person name="Layman D."/>
            <person name="Du H."/>
            <person name="Ali J."/>
            <person name="Berghoff A."/>
            <person name="Jones K."/>
            <person name="Drone K."/>
            <person name="Cotton M."/>
            <person name="Joshu C."/>
            <person name="Antonoiu B."/>
            <person name="Zidanic M."/>
            <person name="Strong C."/>
            <person name="Sun H."/>
            <person name="Lamar B."/>
            <person name="Yordan C."/>
            <person name="Ma P."/>
            <person name="Zhong J."/>
            <person name="Preston R."/>
            <person name="Vil D."/>
            <person name="Shekher M."/>
            <person name="Matero A."/>
            <person name="Shah R."/>
            <person name="Swaby I.K."/>
            <person name="O'Shaughnessy A."/>
            <person name="Rodriguez M."/>
            <person name="Hoffman J."/>
            <person name="Till S."/>
            <person name="Granat S."/>
            <person name="Shohdy N."/>
            <person name="Hasegawa A."/>
            <person name="Hameed A."/>
            <person name="Lodhi M."/>
            <person name="Johnson A."/>
            <person name="Chen E."/>
            <person name="Marra M.A."/>
            <person name="Martienssen R."/>
            <person name="McCombie W.R."/>
        </authorList>
    </citation>
    <scope>NUCLEOTIDE SEQUENCE [LARGE SCALE GENOMIC DNA]</scope>
    <source>
        <strain>cv. Columbia</strain>
    </source>
</reference>
<reference key="7">
    <citation type="journal article" date="2017" name="Plant J.">
        <title>Araport11: a complete reannotation of the Arabidopsis thaliana reference genome.</title>
        <authorList>
            <person name="Cheng C.Y."/>
            <person name="Krishnakumar V."/>
            <person name="Chan A.P."/>
            <person name="Thibaud-Nissen F."/>
            <person name="Schobel S."/>
            <person name="Town C.D."/>
        </authorList>
    </citation>
    <scope>GENOME REANNOTATION</scope>
    <source>
        <strain>cv. Columbia</strain>
    </source>
</reference>
<reference key="8">
    <citation type="journal article" date="2003" name="Science">
        <title>Empirical analysis of transcriptional activity in the Arabidopsis genome.</title>
        <authorList>
            <person name="Yamada K."/>
            <person name="Lim J."/>
            <person name="Dale J.M."/>
            <person name="Chen H."/>
            <person name="Shinn P."/>
            <person name="Palm C.J."/>
            <person name="Southwick A.M."/>
            <person name="Wu H.C."/>
            <person name="Kim C.J."/>
            <person name="Nguyen M."/>
            <person name="Pham P.K."/>
            <person name="Cheuk R.F."/>
            <person name="Karlin-Newmann G."/>
            <person name="Liu S.X."/>
            <person name="Lam B."/>
            <person name="Sakano H."/>
            <person name="Wu T."/>
            <person name="Yu G."/>
            <person name="Miranda M."/>
            <person name="Quach H.L."/>
            <person name="Tripp M."/>
            <person name="Chang C.H."/>
            <person name="Lee J.M."/>
            <person name="Toriumi M.J."/>
            <person name="Chan M.M."/>
            <person name="Tang C.C."/>
            <person name="Onodera C.S."/>
            <person name="Deng J.M."/>
            <person name="Akiyama K."/>
            <person name="Ansari Y."/>
            <person name="Arakawa T."/>
            <person name="Banh J."/>
            <person name="Banno F."/>
            <person name="Bowser L."/>
            <person name="Brooks S.Y."/>
            <person name="Carninci P."/>
            <person name="Chao Q."/>
            <person name="Choy N."/>
            <person name="Enju A."/>
            <person name="Goldsmith A.D."/>
            <person name="Gurjal M."/>
            <person name="Hansen N.F."/>
            <person name="Hayashizaki Y."/>
            <person name="Johnson-Hopson C."/>
            <person name="Hsuan V.W."/>
            <person name="Iida K."/>
            <person name="Karnes M."/>
            <person name="Khan S."/>
            <person name="Koesema E."/>
            <person name="Ishida J."/>
            <person name="Jiang P.X."/>
            <person name="Jones T."/>
            <person name="Kawai J."/>
            <person name="Kamiya A."/>
            <person name="Meyers C."/>
            <person name="Nakajima M."/>
            <person name="Narusaka M."/>
            <person name="Seki M."/>
            <person name="Sakurai T."/>
            <person name="Satou M."/>
            <person name="Tamse R."/>
            <person name="Vaysberg M."/>
            <person name="Wallender E.K."/>
            <person name="Wong C."/>
            <person name="Yamamura Y."/>
            <person name="Yuan S."/>
            <person name="Shinozaki K."/>
            <person name="Davis R.W."/>
            <person name="Theologis A."/>
            <person name="Ecker J.R."/>
        </authorList>
    </citation>
    <scope>NUCLEOTIDE SEQUENCE [LARGE SCALE MRNA] (ISOFORM 1)</scope>
    <source>
        <strain>cv. Columbia</strain>
    </source>
</reference>
<reference key="9">
    <citation type="submission" date="2006-07" db="EMBL/GenBank/DDBJ databases">
        <title>Arabidopsis ORF clone.</title>
        <authorList>
            <person name="Quinitio C."/>
            <person name="Chen H."/>
            <person name="Kim C.J."/>
            <person name="Shinn P."/>
            <person name="Ecker J.R."/>
        </authorList>
    </citation>
    <scope>NUCLEOTIDE SEQUENCE [LARGE SCALE MRNA] (ISOFORM 1)</scope>
    <source>
        <strain>cv. Columbia</strain>
    </source>
</reference>
<reference key="10">
    <citation type="submission" date="2002-03" db="EMBL/GenBank/DDBJ databases">
        <title>Full-length cDNA from Arabidopsis thaliana.</title>
        <authorList>
            <person name="Brover V.V."/>
            <person name="Troukhan M.E."/>
            <person name="Alexandrov N.A."/>
            <person name="Lu Y.-P."/>
            <person name="Flavell R.B."/>
            <person name="Feldmann K.A."/>
        </authorList>
    </citation>
    <scope>NUCLEOTIDE SEQUENCE [LARGE SCALE MRNA] (ISOFORM 1)</scope>
</reference>
<reference key="11">
    <citation type="journal article" date="2009" name="DNA Res.">
        <title>Analysis of multiple occurrences of alternative splicing events in Arabidopsis thaliana using novel sequenced full-length cDNAs.</title>
        <authorList>
            <person name="Iida K."/>
            <person name="Fukami-Kobayashi K."/>
            <person name="Toyoda A."/>
            <person name="Sakaki Y."/>
            <person name="Kobayashi M."/>
            <person name="Seki M."/>
            <person name="Shinozaki K."/>
        </authorList>
    </citation>
    <scope>NUCLEOTIDE SEQUENCE [LARGE SCALE MRNA] (ISOFORM 2)</scope>
    <source>
        <strain>cv. Columbia</strain>
        <tissue>Rosette leaf</tissue>
    </source>
</reference>
<reference key="12">
    <citation type="journal article" date="1999" name="Plant Mol. Biol.">
        <title>Characterization of three novel members of the Arabidopsis SHAGGY-related protein kinase (ASK) multigene family.</title>
        <authorList>
            <person name="Dornelas M.C."/>
            <person name="Wittich P."/>
            <person name="von Recklinghausen I."/>
            <person name="van Lammeren A."/>
            <person name="Kreis M."/>
        </authorList>
    </citation>
    <scope>TISSUE SPECIFICITY</scope>
</reference>
<reference key="13">
    <citation type="journal article" date="2002" name="Plant Physiol.">
        <title>Two putative BIN2 substrates are nuclear components of brassinosteroid signaling.</title>
        <authorList>
            <person name="Zhao J."/>
            <person name="Peng P."/>
            <person name="Schmitz R.J."/>
            <person name="Decker A.D."/>
            <person name="Tax F.E."/>
            <person name="Li J."/>
        </authorList>
    </citation>
    <scope>FUNCTION</scope>
    <scope>MUTAGENESIS OF ARG-80</scope>
    <scope>INTERACTION WITH BZR1 AND BZR2/BES1</scope>
</reference>
<reference key="14">
    <citation type="journal article" date="2002" name="Proc. Natl. Acad. Sci. U.S.A.">
        <title>The GSK3-like kinase BIN2 phosphorylates and destabilizes BZR1, a positive regulator of the brassinosteroid signaling pathway in Arabidopsis.</title>
        <authorList>
            <person name="He J.-X."/>
            <person name="Gendron J.M."/>
            <person name="Yang Y."/>
            <person name="Li J."/>
            <person name="Wang Z.-Y."/>
        </authorList>
    </citation>
    <scope>FUNCTION</scope>
    <scope>INTERACTION WITH BZR1</scope>
</reference>
<reference key="15">
    <citation type="journal article" date="2007" name="Virology">
        <title>Geminivirus pathogenicity protein C4 interacts with Arabidopsis thaliana shaggy-related protein kinase AtSKeta, a component of the brassinosteroid signalling pathway.</title>
        <authorList>
            <person name="Piroux N."/>
            <person name="Saunders K."/>
            <person name="Page A."/>
            <person name="Stanley J."/>
        </authorList>
    </citation>
    <scope>FUNCTION</scope>
    <scope>INTERACTION WITH BEET CURLY TOP VIRUS AL4 AND TOMATO GOLDEN MOSAIC VIRUS AL4</scope>
    <scope>AUTOPHOSPHORYLATION</scope>
</reference>
<reference key="16">
    <citation type="journal article" date="2009" name="Plant Cell">
        <title>Regulation of Arabidopsis brassinosteroid signaling by atypical basic helix-loop-helix proteins.</title>
        <authorList>
            <person name="Wang H."/>
            <person name="Zhu Y."/>
            <person name="Fujioka S."/>
            <person name="Asami T."/>
            <person name="Li J."/>
            <person name="Li J."/>
        </authorList>
    </citation>
    <scope>INTERACTION WITH BHLH150</scope>
</reference>
<reference key="17">
    <citation type="journal article" date="2011" name="Mol. Cell">
        <title>The CDG1 kinase mediates brassinosteroid signal transduction from BRI1 receptor kinase to BSU1 phosphatase and GSK3-like kinase BIN2.</title>
        <authorList>
            <person name="Kim T.W."/>
            <person name="Guan S."/>
            <person name="Burlingame A.L."/>
            <person name="Wang Z.Y."/>
        </authorList>
    </citation>
    <scope>ACTIVITY REGULATION</scope>
    <scope>INTERACTION WITH BSU1</scope>
    <scope>PHOSPHORYLATION AT TYR-200</scope>
</reference>
<reference key="18">
    <citation type="journal article" date="2012" name="Nat. Cell Biol.">
        <title>SPEECHLESS integrates brassinosteroid and stomata signalling pathways.</title>
        <authorList>
            <person name="Gudesblat G.E."/>
            <person name="Schneider-Pizon J."/>
            <person name="Betti C."/>
            <person name="Mayerhofer J."/>
            <person name="Vanhoutte I."/>
            <person name="van Dongen W."/>
            <person name="Boeren S."/>
            <person name="Zhiponova M."/>
            <person name="de Vries S."/>
            <person name="Jonak C."/>
            <person name="Russinova E."/>
        </authorList>
    </citation>
    <scope>FUNCTION</scope>
    <scope>DISRUPTION PHENOTYPE</scope>
    <scope>MUTAGENESIS OF GLU-263</scope>
    <scope>CATALYTIC ACTIVITY</scope>
    <scope>ACTIVITY REGULATION</scope>
    <scope>AUTOPHOSPHORYLATION</scope>
    <scope>TISSUE SPECIFICITY</scope>
    <source>
        <strain>cv. Columbia</strain>
    </source>
</reference>
<reference key="19">
    <citation type="journal article" date="2012" name="Nature">
        <title>Brassinosteroid regulates stomatal development by GSK3-mediated inhibition of a MAPK pathway.</title>
        <authorList>
            <person name="Kim T.W."/>
            <person name="Michniewicz M."/>
            <person name="Bergmann D.C."/>
            <person name="Wang Z.Y."/>
        </authorList>
    </citation>
    <scope>FUNCTION</scope>
    <scope>INTERACTION WITH YDA</scope>
</reference>
<reference key="20">
    <citation type="journal article" date="2013" name="J. Biol. Chem.">
        <title>Brassinosteroid-regulated GSK3/Shaggy-like kinases phosphorylate mitogen-activated protein (MAP) kinase kinases, which control stomata development in Arabidopsis thaliana.</title>
        <authorList>
            <person name="Khan M."/>
            <person name="Rozhon W."/>
            <person name="Bigeard J."/>
            <person name="Pflieger D."/>
            <person name="Husar S."/>
            <person name="Pitzschke A."/>
            <person name="Teige M."/>
            <person name="Jonak C."/>
            <person name="Hirt H."/>
            <person name="Poppenberger B."/>
        </authorList>
    </citation>
    <scope>FUNCTION</scope>
    <scope>INTERACTION WITH MKK4</scope>
</reference>
<reference key="21">
    <citation type="journal article" date="2013" name="Plant J.">
        <title>BSKs are partially redundant positive regulators of brassinosteroid signaling in Arabidopsis.</title>
        <authorList>
            <person name="Sreeramulu S."/>
            <person name="Mostizky Y."/>
            <person name="Sunitha S."/>
            <person name="Shani E."/>
            <person name="Nahum H."/>
            <person name="Salomon D."/>
            <person name="Hayun L.B."/>
            <person name="Gruetter C."/>
            <person name="Rauh D."/>
            <person name="Ori N."/>
            <person name="Sessa G."/>
        </authorList>
    </citation>
    <scope>FUNCTION</scope>
    <scope>INTERACTION WITH BSK1; BSK6; BSK8 AND BSK11</scope>
    <scope>MUTAGENESIS OF LYS-69</scope>
</reference>
<reference key="22">
    <citation type="journal article" date="2017" name="Mol. Cell">
        <title>The F-box protein KIB1 mediates brassinosteroid-induced inactivation and degradation of GSK3-like kinases in Arabidopsis.</title>
        <authorList>
            <person name="Zhu J.-Y."/>
            <person name="Li Y."/>
            <person name="Cao D.-M."/>
            <person name="Yang H."/>
            <person name="Oh E."/>
            <person name="Bi Y."/>
            <person name="Zhu S."/>
            <person name="Wang Z.-Y."/>
        </authorList>
    </citation>
    <scope>UBIQUITINATION</scope>
    <scope>ACTIVITY REGULATION</scope>
    <scope>INTERACTION WITH KIB1 AND KIB2</scope>
    <scope>MUTAGENESIS OF TYR-200 AND GLU-263</scope>
    <source>
        <strain>cv. Columbia</strain>
        <strain>cv. Wassilewskija</strain>
    </source>
</reference>
<reference key="23">
    <citation type="journal article" date="2017" name="Plant Cell">
        <title>Arabidopsis WRKY46, WRKY54, and WRKY70 transcription factors are involved in brassinosteroid-regulated plant growth and drought responses.</title>
        <authorList>
            <person name="Chen J."/>
            <person name="Nolan T.M."/>
            <person name="Ye H."/>
            <person name="Zhang M."/>
            <person name="Tong H."/>
            <person name="Xin P."/>
            <person name="Chu J."/>
            <person name="Chu C."/>
            <person name="Li Z."/>
            <person name="Yin Y."/>
        </authorList>
    </citation>
    <scope>FUNCTION</scope>
    <scope>INTERACTION WITH WRKY46; WRKY54 AND WRKY70</scope>
    <source>
        <strain>cv. Columbia</strain>
    </source>
</reference>
<reference key="24">
    <citation type="journal article" date="2017" name="Proc. Natl. Acad. Sci. U.S.A.">
        <title>Phosphosite charge rather than shootward localization determines OCTOPUS activity in root protophloem.</title>
        <authorList>
            <person name="Breda A.S."/>
            <person name="Hazak O."/>
            <person name="Hardtke C.S."/>
        </authorList>
    </citation>
    <scope>SUBCELLULAR LOCATION</scope>
    <source>
        <strain>cv. Columbia</strain>
    </source>
</reference>
<reference key="25">
    <citation type="journal article" date="2018" name="Nature">
        <title>POLAR-guided signalling complex assembly and localization drive asymmetric cell division.</title>
        <authorList>
            <person name="Houbaert A."/>
            <person name="Zhang C."/>
            <person name="Tiwari M."/>
            <person name="Wang K."/>
            <person name="de Marcos Serrano A."/>
            <person name="Savatin D.V."/>
            <person name="Urs M.J."/>
            <person name="Zhiponova M.K."/>
            <person name="Gudesblat G.E."/>
            <person name="Vanhoutte I."/>
            <person name="Eeckhout D."/>
            <person name="Boeren S."/>
            <person name="Karimi M."/>
            <person name="Betti C."/>
            <person name="Jacobs T."/>
            <person name="Fenoll C."/>
            <person name="Mena M."/>
            <person name="de Vries S."/>
            <person name="De Jaeger G."/>
            <person name="Russinova E."/>
        </authorList>
    </citation>
    <scope>FUNCTION</scope>
    <scope>MUTAGENESIS OF LYS-69</scope>
    <scope>INTERACTION WITH POLAR AND BASL</scope>
    <scope>SUBCELLULAR LOCATION</scope>
    <scope>DEVELOPMENTAL STAGE</scope>
    <scope>TISSUE SPECIFICITY</scope>
    <source>
        <strain>cv. Columbia</strain>
    </source>
</reference>
<dbReference type="EC" id="2.7.11.1" evidence="6 9 14"/>
<dbReference type="EMBL" id="X94939">
    <property type="protein sequence ID" value="CAA64409.1"/>
    <property type="molecule type" value="mRNA"/>
</dbReference>
<dbReference type="EMBL" id="Y08947">
    <property type="protein sequence ID" value="CAA70144.1"/>
    <property type="molecule type" value="Genomic_DNA"/>
</dbReference>
<dbReference type="EMBL" id="AY157149">
    <property type="protein sequence ID" value="AAN71719.1"/>
    <property type="molecule type" value="Genomic_DNA"/>
</dbReference>
<dbReference type="EMBL" id="AL035526">
    <property type="protein sequence ID" value="CAB37456.1"/>
    <property type="molecule type" value="Genomic_DNA"/>
</dbReference>
<dbReference type="EMBL" id="AL161549">
    <property type="protein sequence ID" value="CAB78873.1"/>
    <property type="molecule type" value="Genomic_DNA"/>
</dbReference>
<dbReference type="EMBL" id="CP002687">
    <property type="protein sequence ID" value="AEE84079.1"/>
    <property type="molecule type" value="Genomic_DNA"/>
</dbReference>
<dbReference type="EMBL" id="AY075699">
    <property type="protein sequence ID" value="AAL77705.1"/>
    <property type="molecule type" value="mRNA"/>
</dbReference>
<dbReference type="EMBL" id="BT026031">
    <property type="protein sequence ID" value="ABG48387.1"/>
    <property type="molecule type" value="mRNA"/>
</dbReference>
<dbReference type="EMBL" id="AY086529">
    <property type="protein sequence ID" value="AAM63594.1"/>
    <property type="molecule type" value="mRNA"/>
</dbReference>
<dbReference type="EMBL" id="AK318990">
    <property type="protein sequence ID" value="BAH57105.1"/>
    <property type="molecule type" value="mRNA"/>
</dbReference>
<dbReference type="EMBL" id="AK317697">
    <property type="protein sequence ID" value="BAH20356.1"/>
    <property type="molecule type" value="mRNA"/>
</dbReference>
<dbReference type="PIR" id="T04863">
    <property type="entry name" value="T04863"/>
</dbReference>
<dbReference type="RefSeq" id="NP_193606.1">
    <molecule id="Q39011-1"/>
    <property type="nucleotide sequence ID" value="NM_117987.4"/>
</dbReference>
<dbReference type="SMR" id="Q39011"/>
<dbReference type="BioGRID" id="12898">
    <property type="interactions" value="514"/>
</dbReference>
<dbReference type="DIP" id="DIP-46010N"/>
<dbReference type="FunCoup" id="Q39011">
    <property type="interactions" value="3376"/>
</dbReference>
<dbReference type="IntAct" id="Q39011">
    <property type="interactions" value="17"/>
</dbReference>
<dbReference type="MINT" id="Q39011"/>
<dbReference type="STRING" id="3702.Q39011"/>
<dbReference type="iPTMnet" id="Q39011"/>
<dbReference type="PaxDb" id="3702-AT4G18710.1"/>
<dbReference type="ProteomicsDB" id="237104">
    <molecule id="Q39011-1"/>
</dbReference>
<dbReference type="EnsemblPlants" id="AT4G18710.1">
    <molecule id="Q39011-1"/>
    <property type="protein sequence ID" value="AT4G18710.1"/>
    <property type="gene ID" value="AT4G18710"/>
</dbReference>
<dbReference type="GeneID" id="827605"/>
<dbReference type="Gramene" id="AT4G18710.1">
    <molecule id="Q39011-1"/>
    <property type="protein sequence ID" value="AT4G18710.1"/>
    <property type="gene ID" value="AT4G18710"/>
</dbReference>
<dbReference type="KEGG" id="ath:AT4G18710"/>
<dbReference type="Araport" id="AT4G18710"/>
<dbReference type="TAIR" id="AT4G18710">
    <property type="gene designation" value="BIN2"/>
</dbReference>
<dbReference type="eggNOG" id="KOG0658">
    <property type="taxonomic scope" value="Eukaryota"/>
</dbReference>
<dbReference type="InParanoid" id="Q39011"/>
<dbReference type="OMA" id="FFESHCT"/>
<dbReference type="OrthoDB" id="1023529at2759"/>
<dbReference type="PhylomeDB" id="Q39011"/>
<dbReference type="BRENDA" id="2.7.11.26">
    <property type="organism ID" value="399"/>
</dbReference>
<dbReference type="PRO" id="PR:Q39011"/>
<dbReference type="Proteomes" id="UP000006548">
    <property type="component" value="Chromosome 4"/>
</dbReference>
<dbReference type="ExpressionAtlas" id="Q39011">
    <property type="expression patterns" value="baseline and differential"/>
</dbReference>
<dbReference type="GO" id="GO:0005938">
    <property type="term" value="C:cell cortex"/>
    <property type="evidence" value="ECO:0000314"/>
    <property type="project" value="UniProtKB"/>
</dbReference>
<dbReference type="GO" id="GO:0005737">
    <property type="term" value="C:cytoplasm"/>
    <property type="evidence" value="ECO:0000314"/>
    <property type="project" value="UniProtKB"/>
</dbReference>
<dbReference type="GO" id="GO:0005634">
    <property type="term" value="C:nucleus"/>
    <property type="evidence" value="ECO:0000314"/>
    <property type="project" value="UniProtKB"/>
</dbReference>
<dbReference type="GO" id="GO:0005886">
    <property type="term" value="C:plasma membrane"/>
    <property type="evidence" value="ECO:0000314"/>
    <property type="project" value="UniProtKB"/>
</dbReference>
<dbReference type="GO" id="GO:0005524">
    <property type="term" value="F:ATP binding"/>
    <property type="evidence" value="ECO:0007669"/>
    <property type="project" value="UniProtKB-KW"/>
</dbReference>
<dbReference type="GO" id="GO:0042802">
    <property type="term" value="F:identical protein binding"/>
    <property type="evidence" value="ECO:0000353"/>
    <property type="project" value="IntAct"/>
</dbReference>
<dbReference type="GO" id="GO:0004672">
    <property type="term" value="F:protein kinase activity"/>
    <property type="evidence" value="ECO:0000304"/>
    <property type="project" value="TAIR"/>
</dbReference>
<dbReference type="GO" id="GO:0106310">
    <property type="term" value="F:protein serine kinase activity"/>
    <property type="evidence" value="ECO:0007669"/>
    <property type="project" value="RHEA"/>
</dbReference>
<dbReference type="GO" id="GO:0004674">
    <property type="term" value="F:protein serine/threonine kinase activity"/>
    <property type="evidence" value="ECO:0000314"/>
    <property type="project" value="TAIR"/>
</dbReference>
<dbReference type="GO" id="GO:0009742">
    <property type="term" value="P:brassinosteroid mediated signaling pathway"/>
    <property type="evidence" value="ECO:0000315"/>
    <property type="project" value="TAIR"/>
</dbReference>
<dbReference type="GO" id="GO:0009729">
    <property type="term" value="P:detection of brassinosteroid stimulus"/>
    <property type="evidence" value="ECO:0000315"/>
    <property type="project" value="TAIR"/>
</dbReference>
<dbReference type="GO" id="GO:0009965">
    <property type="term" value="P:leaf morphogenesis"/>
    <property type="evidence" value="ECO:0000315"/>
    <property type="project" value="TAIR"/>
</dbReference>
<dbReference type="GO" id="GO:0009825">
    <property type="term" value="P:multidimensional cell growth"/>
    <property type="evidence" value="ECO:0000315"/>
    <property type="project" value="TAIR"/>
</dbReference>
<dbReference type="GO" id="GO:1900458">
    <property type="term" value="P:negative regulation of brassinosteroid mediated signaling pathway"/>
    <property type="evidence" value="ECO:0000315"/>
    <property type="project" value="UniProtKB"/>
</dbReference>
<dbReference type="GO" id="GO:0046827">
    <property type="term" value="P:positive regulation of protein export from nucleus"/>
    <property type="evidence" value="ECO:0000314"/>
    <property type="project" value="TAIR"/>
</dbReference>
<dbReference type="GO" id="GO:0046777">
    <property type="term" value="P:protein autophosphorylation"/>
    <property type="evidence" value="ECO:0007005"/>
    <property type="project" value="TAIR"/>
</dbReference>
<dbReference type="GO" id="GO:0006468">
    <property type="term" value="P:protein phosphorylation"/>
    <property type="evidence" value="ECO:0000314"/>
    <property type="project" value="TAIR"/>
</dbReference>
<dbReference type="GO" id="GO:0009733">
    <property type="term" value="P:response to auxin"/>
    <property type="evidence" value="ECO:0000315"/>
    <property type="project" value="TAIR"/>
</dbReference>
<dbReference type="GO" id="GO:0048765">
    <property type="term" value="P:root hair cell differentiation"/>
    <property type="evidence" value="ECO:0000316"/>
    <property type="project" value="TAIR"/>
</dbReference>
<dbReference type="CDD" id="cd14137">
    <property type="entry name" value="STKc_GSK3"/>
    <property type="match status" value="1"/>
</dbReference>
<dbReference type="FunFam" id="3.30.200.20:FF:000009">
    <property type="entry name" value="Glycogen synthase kinase-3 beta"/>
    <property type="match status" value="1"/>
</dbReference>
<dbReference type="FunFam" id="1.10.510.10:FF:000082">
    <property type="entry name" value="Shaggy-related protein kinase kappa"/>
    <property type="match status" value="1"/>
</dbReference>
<dbReference type="Gene3D" id="3.30.200.20">
    <property type="entry name" value="Phosphorylase Kinase, domain 1"/>
    <property type="match status" value="1"/>
</dbReference>
<dbReference type="Gene3D" id="1.10.510.10">
    <property type="entry name" value="Transferase(Phosphotransferase) domain 1"/>
    <property type="match status" value="1"/>
</dbReference>
<dbReference type="InterPro" id="IPR050591">
    <property type="entry name" value="GSK-3"/>
</dbReference>
<dbReference type="InterPro" id="IPR011009">
    <property type="entry name" value="Kinase-like_dom_sf"/>
</dbReference>
<dbReference type="InterPro" id="IPR000719">
    <property type="entry name" value="Prot_kinase_dom"/>
</dbReference>
<dbReference type="InterPro" id="IPR017441">
    <property type="entry name" value="Protein_kinase_ATP_BS"/>
</dbReference>
<dbReference type="InterPro" id="IPR008271">
    <property type="entry name" value="Ser/Thr_kinase_AS"/>
</dbReference>
<dbReference type="InterPro" id="IPR039192">
    <property type="entry name" value="STKc_GSK3"/>
</dbReference>
<dbReference type="PANTHER" id="PTHR24057">
    <property type="entry name" value="GLYCOGEN SYNTHASE KINASE-3 ALPHA"/>
    <property type="match status" value="1"/>
</dbReference>
<dbReference type="PANTHER" id="PTHR24057:SF42">
    <property type="entry name" value="SHAGGY-RELATED PROTEIN KINASE ETA"/>
    <property type="match status" value="1"/>
</dbReference>
<dbReference type="Pfam" id="PF00069">
    <property type="entry name" value="Pkinase"/>
    <property type="match status" value="1"/>
</dbReference>
<dbReference type="SMART" id="SM00220">
    <property type="entry name" value="S_TKc"/>
    <property type="match status" value="1"/>
</dbReference>
<dbReference type="SUPFAM" id="SSF56112">
    <property type="entry name" value="Protein kinase-like (PK-like)"/>
    <property type="match status" value="1"/>
</dbReference>
<dbReference type="PROSITE" id="PS00107">
    <property type="entry name" value="PROTEIN_KINASE_ATP"/>
    <property type="match status" value="1"/>
</dbReference>
<dbReference type="PROSITE" id="PS50011">
    <property type="entry name" value="PROTEIN_KINASE_DOM"/>
    <property type="match status" value="1"/>
</dbReference>
<dbReference type="PROSITE" id="PS00108">
    <property type="entry name" value="PROTEIN_KINASE_ST"/>
    <property type="match status" value="1"/>
</dbReference>
<protein>
    <recommendedName>
        <fullName evidence="26">Shaggy-related protein kinase eta</fullName>
        <ecNumber evidence="6 9 14">2.7.11.1</ecNumber>
    </recommendedName>
    <alternativeName>
        <fullName evidence="21">ASK-eta</fullName>
    </alternativeName>
    <alternativeName>
        <fullName evidence="23">Protein BRASSINOSTEROID INSENSITIVE 2</fullName>
    </alternativeName>
    <alternativeName>
        <fullName evidence="22">Protein ULTRACURVATA 1</fullName>
    </alternativeName>
    <alternativeName>
        <fullName evidence="25">Shaggy-related protein kinase 21</fullName>
        <shortName evidence="25">AtSK21</shortName>
    </alternativeName>
</protein>
<proteinExistence type="evidence at protein level"/>
<gene>
    <name evidence="21" type="primary">ASK7</name>
    <name evidence="23" type="synonym">BIN2</name>
    <name evidence="24" type="synonym">DWF12</name>
    <name evidence="25" type="synonym">SK21</name>
    <name evidence="22" type="synonym">UCU1</name>
    <name evidence="28" type="ordered locus">At4g18710</name>
    <name evidence="29" type="ORF">F28A21.120</name>
</gene>
<accession>Q39011</accession>
<accession>B9DHY9</accession>
<accession>C0Z326</accession>
<accession>Q147R2</accession>
<accession>Q8S9H8</accession>
<accession>Q9SN42</accession>